<reference key="1">
    <citation type="journal article" date="2006" name="PLoS Genet.">
        <title>The complete genome sequence and comparative genome analysis of the high pathogenicity Yersinia enterocolitica strain 8081.</title>
        <authorList>
            <person name="Thomson N.R."/>
            <person name="Howard S."/>
            <person name="Wren B.W."/>
            <person name="Holden M.T.G."/>
            <person name="Crossman L."/>
            <person name="Challis G.L."/>
            <person name="Churcher C."/>
            <person name="Mungall K."/>
            <person name="Brooks K."/>
            <person name="Chillingworth T."/>
            <person name="Feltwell T."/>
            <person name="Abdellah Z."/>
            <person name="Hauser H."/>
            <person name="Jagels K."/>
            <person name="Maddison M."/>
            <person name="Moule S."/>
            <person name="Sanders M."/>
            <person name="Whitehead S."/>
            <person name="Quail M.A."/>
            <person name="Dougan G."/>
            <person name="Parkhill J."/>
            <person name="Prentice M.B."/>
        </authorList>
    </citation>
    <scope>NUCLEOTIDE SEQUENCE [LARGE SCALE GENOMIC DNA]</scope>
    <source>
        <strain>NCTC 13174 / 8081</strain>
    </source>
</reference>
<accession>A1JPB6</accession>
<dbReference type="EC" id="2.3.1.1" evidence="1"/>
<dbReference type="EMBL" id="AM286415">
    <property type="protein sequence ID" value="CAL13337.1"/>
    <property type="molecule type" value="Genomic_DNA"/>
</dbReference>
<dbReference type="RefSeq" id="WP_005173274.1">
    <property type="nucleotide sequence ID" value="NC_008800.1"/>
</dbReference>
<dbReference type="RefSeq" id="YP_001007481.1">
    <property type="nucleotide sequence ID" value="NC_008800.1"/>
</dbReference>
<dbReference type="SMR" id="A1JPB6"/>
<dbReference type="KEGG" id="yen:YE3308"/>
<dbReference type="PATRIC" id="fig|393305.7.peg.3517"/>
<dbReference type="eggNOG" id="COG0548">
    <property type="taxonomic scope" value="Bacteria"/>
</dbReference>
<dbReference type="eggNOG" id="COG1246">
    <property type="taxonomic scope" value="Bacteria"/>
</dbReference>
<dbReference type="HOGENOM" id="CLU_024773_0_0_6"/>
<dbReference type="OrthoDB" id="9802238at2"/>
<dbReference type="UniPathway" id="UPA00068">
    <property type="reaction ID" value="UER00106"/>
</dbReference>
<dbReference type="Proteomes" id="UP000000642">
    <property type="component" value="Chromosome"/>
</dbReference>
<dbReference type="GO" id="GO:0005737">
    <property type="term" value="C:cytoplasm"/>
    <property type="evidence" value="ECO:0007669"/>
    <property type="project" value="UniProtKB-SubCell"/>
</dbReference>
<dbReference type="GO" id="GO:0004042">
    <property type="term" value="F:L-glutamate N-acetyltransferase activity"/>
    <property type="evidence" value="ECO:0007669"/>
    <property type="project" value="UniProtKB-UniRule"/>
</dbReference>
<dbReference type="GO" id="GO:0006526">
    <property type="term" value="P:L-arginine biosynthetic process"/>
    <property type="evidence" value="ECO:0007669"/>
    <property type="project" value="UniProtKB-UniRule"/>
</dbReference>
<dbReference type="CDD" id="cd04237">
    <property type="entry name" value="AAK_NAGS-ABP"/>
    <property type="match status" value="1"/>
</dbReference>
<dbReference type="CDD" id="cd04301">
    <property type="entry name" value="NAT_SF"/>
    <property type="match status" value="1"/>
</dbReference>
<dbReference type="FunFam" id="3.40.1160.10:FF:000005">
    <property type="entry name" value="Amino-acid acetyltransferase"/>
    <property type="match status" value="1"/>
</dbReference>
<dbReference type="FunFam" id="3.40.630.30:FF:000009">
    <property type="entry name" value="Amino-acid acetyltransferase"/>
    <property type="match status" value="1"/>
</dbReference>
<dbReference type="Gene3D" id="3.40.630.30">
    <property type="match status" value="1"/>
</dbReference>
<dbReference type="Gene3D" id="3.40.1160.10">
    <property type="entry name" value="Acetylglutamate kinase-like"/>
    <property type="match status" value="1"/>
</dbReference>
<dbReference type="HAMAP" id="MF_01105">
    <property type="entry name" value="N_acetyl_glu_synth"/>
    <property type="match status" value="1"/>
</dbReference>
<dbReference type="InterPro" id="IPR036393">
    <property type="entry name" value="AceGlu_kinase-like_sf"/>
</dbReference>
<dbReference type="InterPro" id="IPR016181">
    <property type="entry name" value="Acyl_CoA_acyltransferase"/>
</dbReference>
<dbReference type="InterPro" id="IPR001048">
    <property type="entry name" value="Asp/Glu/Uridylate_kinase"/>
</dbReference>
<dbReference type="InterPro" id="IPR000182">
    <property type="entry name" value="GNAT_dom"/>
</dbReference>
<dbReference type="InterPro" id="IPR033719">
    <property type="entry name" value="NAGS_kin"/>
</dbReference>
<dbReference type="InterPro" id="IPR010167">
    <property type="entry name" value="NH2A_AcTrfase"/>
</dbReference>
<dbReference type="NCBIfam" id="TIGR01890">
    <property type="entry name" value="N-Ac-Glu-synth"/>
    <property type="match status" value="1"/>
</dbReference>
<dbReference type="NCBIfam" id="NF003641">
    <property type="entry name" value="PRK05279.1"/>
    <property type="match status" value="1"/>
</dbReference>
<dbReference type="PANTHER" id="PTHR30602">
    <property type="entry name" value="AMINO-ACID ACETYLTRANSFERASE"/>
    <property type="match status" value="1"/>
</dbReference>
<dbReference type="PANTHER" id="PTHR30602:SF12">
    <property type="entry name" value="AMINO-ACID ACETYLTRANSFERASE NAGS1, CHLOROPLASTIC-RELATED"/>
    <property type="match status" value="1"/>
</dbReference>
<dbReference type="Pfam" id="PF00696">
    <property type="entry name" value="AA_kinase"/>
    <property type="match status" value="1"/>
</dbReference>
<dbReference type="Pfam" id="PF00583">
    <property type="entry name" value="Acetyltransf_1"/>
    <property type="match status" value="1"/>
</dbReference>
<dbReference type="PIRSF" id="PIRSF000423">
    <property type="entry name" value="ArgA"/>
    <property type="match status" value="1"/>
</dbReference>
<dbReference type="SUPFAM" id="SSF55729">
    <property type="entry name" value="Acyl-CoA N-acyltransferases (Nat)"/>
    <property type="match status" value="1"/>
</dbReference>
<dbReference type="SUPFAM" id="SSF53633">
    <property type="entry name" value="Carbamate kinase-like"/>
    <property type="match status" value="1"/>
</dbReference>
<dbReference type="PROSITE" id="PS51186">
    <property type="entry name" value="GNAT"/>
    <property type="match status" value="1"/>
</dbReference>
<evidence type="ECO:0000255" key="1">
    <source>
        <dbReference type="HAMAP-Rule" id="MF_01105"/>
    </source>
</evidence>
<proteinExistence type="inferred from homology"/>
<sequence>MKERSTELVQGFRHSVPYINAHRGKTFVVMLGGEAIEHENFSSIVNDIGLLHSLGIRLVVVYGARPQIDSNLAQHHYEPVYHKHTRVTDARTLEMVKQAAGLLQLDITARLSMSLNNTPLQGAHINVVSGNFIIAQPLGVDDGVDYCHSGRIRRIDEEAIHRQLDNGAIVLLGPVAVSVTGESFNLTSEEVATQLAIKLKAEKMIGFCSSQGVTDSEGNIISELFPNDAQKRIEDLEQEGDYNSGTVRFLRGAVKACRSGVRRSHLLSYQEDGALVQELFSRDGIGTQIVMESAEQVRRATINDIGGILELIRPLEQQGILVRRSREQLEMEIDKFTIIERDNLTIACAALYPFPEEQIGEMACVAVHPDYRSSSRGEMLLKRVANQARQMGLKKLFVLTTRSIHWFQERGFTPAEVDVLPIQKQELYNYQRRSKILLADL</sequence>
<feature type="chain" id="PRO_1000084824" description="Amino-acid acetyltransferase">
    <location>
        <begin position="1"/>
        <end position="441"/>
    </location>
</feature>
<feature type="domain" description="N-acetyltransferase" evidence="1">
    <location>
        <begin position="295"/>
        <end position="434"/>
    </location>
</feature>
<organism>
    <name type="scientific">Yersinia enterocolitica serotype O:8 / biotype 1B (strain NCTC 13174 / 8081)</name>
    <dbReference type="NCBI Taxonomy" id="393305"/>
    <lineage>
        <taxon>Bacteria</taxon>
        <taxon>Pseudomonadati</taxon>
        <taxon>Pseudomonadota</taxon>
        <taxon>Gammaproteobacteria</taxon>
        <taxon>Enterobacterales</taxon>
        <taxon>Yersiniaceae</taxon>
        <taxon>Yersinia</taxon>
    </lineage>
</organism>
<protein>
    <recommendedName>
        <fullName evidence="1">Amino-acid acetyltransferase</fullName>
        <ecNumber evidence="1">2.3.1.1</ecNumber>
    </recommendedName>
    <alternativeName>
        <fullName evidence="1">N-acetylglutamate synthase</fullName>
        <shortName evidence="1">AGS</shortName>
        <shortName evidence="1">NAGS</shortName>
    </alternativeName>
</protein>
<name>ARGA_YERE8</name>
<comment type="catalytic activity">
    <reaction evidence="1">
        <text>L-glutamate + acetyl-CoA = N-acetyl-L-glutamate + CoA + H(+)</text>
        <dbReference type="Rhea" id="RHEA:24292"/>
        <dbReference type="ChEBI" id="CHEBI:15378"/>
        <dbReference type="ChEBI" id="CHEBI:29985"/>
        <dbReference type="ChEBI" id="CHEBI:44337"/>
        <dbReference type="ChEBI" id="CHEBI:57287"/>
        <dbReference type="ChEBI" id="CHEBI:57288"/>
        <dbReference type="EC" id="2.3.1.1"/>
    </reaction>
</comment>
<comment type="pathway">
    <text evidence="1">Amino-acid biosynthesis; L-arginine biosynthesis; N(2)-acetyl-L-ornithine from L-glutamate: step 1/4.</text>
</comment>
<comment type="subunit">
    <text evidence="1">Homohexamer.</text>
</comment>
<comment type="subcellular location">
    <subcellularLocation>
        <location evidence="1">Cytoplasm</location>
    </subcellularLocation>
</comment>
<comment type="similarity">
    <text evidence="1">Belongs to the acetyltransferase family. ArgA subfamily.</text>
</comment>
<gene>
    <name evidence="1" type="primary">argA</name>
    <name type="ordered locus">YE3308</name>
</gene>
<keyword id="KW-0012">Acyltransferase</keyword>
<keyword id="KW-0028">Amino-acid biosynthesis</keyword>
<keyword id="KW-0055">Arginine biosynthesis</keyword>
<keyword id="KW-0963">Cytoplasm</keyword>
<keyword id="KW-0808">Transferase</keyword>